<evidence type="ECO:0000255" key="1">
    <source>
        <dbReference type="HAMAP-Rule" id="MF_00412"/>
    </source>
</evidence>
<feature type="chain" id="PRO_1000193620" description="Gamma-glutamyl phosphate reductase">
    <location>
        <begin position="1"/>
        <end position="415"/>
    </location>
</feature>
<accession>B8DHP3</accession>
<reference key="1">
    <citation type="journal article" date="2011" name="J. Bacteriol.">
        <title>Genome sequence of lineage III Listeria monocytogenes strain HCC23.</title>
        <authorList>
            <person name="Steele C.L."/>
            <person name="Donaldson J.R."/>
            <person name="Paul D."/>
            <person name="Banes M.M."/>
            <person name="Arick T."/>
            <person name="Bridges S.M."/>
            <person name="Lawrence M.L."/>
        </authorList>
    </citation>
    <scope>NUCLEOTIDE SEQUENCE [LARGE SCALE GENOMIC DNA]</scope>
    <source>
        <strain>HCC23</strain>
    </source>
</reference>
<comment type="function">
    <text evidence="1">Catalyzes the NADPH-dependent reduction of L-glutamate 5-phosphate into L-glutamate 5-semialdehyde and phosphate. The product spontaneously undergoes cyclization to form 1-pyrroline-5-carboxylate.</text>
</comment>
<comment type="catalytic activity">
    <reaction evidence="1">
        <text>L-glutamate 5-semialdehyde + phosphate + NADP(+) = L-glutamyl 5-phosphate + NADPH + H(+)</text>
        <dbReference type="Rhea" id="RHEA:19541"/>
        <dbReference type="ChEBI" id="CHEBI:15378"/>
        <dbReference type="ChEBI" id="CHEBI:43474"/>
        <dbReference type="ChEBI" id="CHEBI:57783"/>
        <dbReference type="ChEBI" id="CHEBI:58066"/>
        <dbReference type="ChEBI" id="CHEBI:58274"/>
        <dbReference type="ChEBI" id="CHEBI:58349"/>
        <dbReference type="EC" id="1.2.1.41"/>
    </reaction>
</comment>
<comment type="pathway">
    <text evidence="1">Amino-acid biosynthesis; L-proline biosynthesis; L-glutamate 5-semialdehyde from L-glutamate: step 2/2.</text>
</comment>
<comment type="subcellular location">
    <subcellularLocation>
        <location evidence="1">Cytoplasm</location>
    </subcellularLocation>
</comment>
<comment type="similarity">
    <text evidence="1">Belongs to the gamma-glutamyl phosphate reductase family.</text>
</comment>
<protein>
    <recommendedName>
        <fullName evidence="1">Gamma-glutamyl phosphate reductase</fullName>
        <shortName evidence="1">GPR</shortName>
        <ecNumber evidence="1">1.2.1.41</ecNumber>
    </recommendedName>
    <alternativeName>
        <fullName evidence="1">Glutamate-5-semialdehyde dehydrogenase</fullName>
    </alternativeName>
    <alternativeName>
        <fullName evidence="1">Glutamyl-gamma-semialdehyde dehydrogenase</fullName>
        <shortName evidence="1">GSA dehydrogenase</shortName>
    </alternativeName>
</protein>
<proteinExistence type="inferred from homology"/>
<sequence>MTELIKKGSAAKEAAQFLAQATTKQKNTALLNLSNDLLAHTSTLLKENEKDILRAQKKGTPETMIDRLRLTEDRMKEISEAVKQVVALKDPIGEVTNMWKNEAELTIGKTRVPLGVIGIIYESRPNVTVDASVLCFKTGNAVILRGGSDAIDSNKALMSVIQDSLEASGFPRSSVQLIEDTSRETARDMMRLNRFLDVLIPRGGARLIQTVLENATVPVIETGTGNCHIYVDKAAEKQMAIDILVNAKCSRPSVCNAAETLLIHRDVAEDYLPAMETALKEYDVELRADERAKEILQEAKAAKESDWEDEFLDFILAVKVVDSAEEAIEHINKYGTKHSEAIISNDYATGQAFHQKVDAAAVYINASTRFTDGFAMGFGAEIGISTQKLHARGPMGLTELTSTKYIIFGDGQIRN</sequence>
<gene>
    <name evidence="1" type="primary">proA</name>
    <name type="ordered locus">LMHCC_1314</name>
</gene>
<organism>
    <name type="scientific">Listeria monocytogenes serotype 4a (strain HCC23)</name>
    <dbReference type="NCBI Taxonomy" id="552536"/>
    <lineage>
        <taxon>Bacteria</taxon>
        <taxon>Bacillati</taxon>
        <taxon>Bacillota</taxon>
        <taxon>Bacilli</taxon>
        <taxon>Bacillales</taxon>
        <taxon>Listeriaceae</taxon>
        <taxon>Listeria</taxon>
    </lineage>
</organism>
<dbReference type="EC" id="1.2.1.41" evidence="1"/>
<dbReference type="EMBL" id="CP001175">
    <property type="protein sequence ID" value="ACK39659.1"/>
    <property type="molecule type" value="Genomic_DNA"/>
</dbReference>
<dbReference type="RefSeq" id="WP_012581418.1">
    <property type="nucleotide sequence ID" value="NC_011660.1"/>
</dbReference>
<dbReference type="SMR" id="B8DHP3"/>
<dbReference type="KEGG" id="lmh:LMHCC_1314"/>
<dbReference type="HOGENOM" id="CLU_030231_0_0_9"/>
<dbReference type="UniPathway" id="UPA00098">
    <property type="reaction ID" value="UER00360"/>
</dbReference>
<dbReference type="GO" id="GO:0005737">
    <property type="term" value="C:cytoplasm"/>
    <property type="evidence" value="ECO:0007669"/>
    <property type="project" value="UniProtKB-SubCell"/>
</dbReference>
<dbReference type="GO" id="GO:0004350">
    <property type="term" value="F:glutamate-5-semialdehyde dehydrogenase activity"/>
    <property type="evidence" value="ECO:0007669"/>
    <property type="project" value="UniProtKB-UniRule"/>
</dbReference>
<dbReference type="GO" id="GO:0050661">
    <property type="term" value="F:NADP binding"/>
    <property type="evidence" value="ECO:0007669"/>
    <property type="project" value="InterPro"/>
</dbReference>
<dbReference type="GO" id="GO:0055129">
    <property type="term" value="P:L-proline biosynthetic process"/>
    <property type="evidence" value="ECO:0007669"/>
    <property type="project" value="UniProtKB-UniRule"/>
</dbReference>
<dbReference type="CDD" id="cd07079">
    <property type="entry name" value="ALDH_F18-19_ProA-GPR"/>
    <property type="match status" value="1"/>
</dbReference>
<dbReference type="FunFam" id="3.40.309.10:FF:000006">
    <property type="entry name" value="Gamma-glutamyl phosphate reductase"/>
    <property type="match status" value="1"/>
</dbReference>
<dbReference type="Gene3D" id="3.40.605.10">
    <property type="entry name" value="Aldehyde Dehydrogenase, Chain A, domain 1"/>
    <property type="match status" value="1"/>
</dbReference>
<dbReference type="Gene3D" id="3.40.309.10">
    <property type="entry name" value="Aldehyde Dehydrogenase, Chain A, domain 2"/>
    <property type="match status" value="1"/>
</dbReference>
<dbReference type="HAMAP" id="MF_00412">
    <property type="entry name" value="ProA"/>
    <property type="match status" value="1"/>
</dbReference>
<dbReference type="InterPro" id="IPR016161">
    <property type="entry name" value="Ald_DH/histidinol_DH"/>
</dbReference>
<dbReference type="InterPro" id="IPR016163">
    <property type="entry name" value="Ald_DH_C"/>
</dbReference>
<dbReference type="InterPro" id="IPR016162">
    <property type="entry name" value="Ald_DH_N"/>
</dbReference>
<dbReference type="InterPro" id="IPR015590">
    <property type="entry name" value="Aldehyde_DH_dom"/>
</dbReference>
<dbReference type="InterPro" id="IPR020593">
    <property type="entry name" value="G-glutamylP_reductase_CS"/>
</dbReference>
<dbReference type="InterPro" id="IPR012134">
    <property type="entry name" value="Glu-5-SA_DH"/>
</dbReference>
<dbReference type="InterPro" id="IPR000965">
    <property type="entry name" value="GPR_dom"/>
</dbReference>
<dbReference type="NCBIfam" id="NF001221">
    <property type="entry name" value="PRK00197.1"/>
    <property type="match status" value="1"/>
</dbReference>
<dbReference type="NCBIfam" id="TIGR00407">
    <property type="entry name" value="proA"/>
    <property type="match status" value="1"/>
</dbReference>
<dbReference type="PANTHER" id="PTHR11063:SF8">
    <property type="entry name" value="DELTA-1-PYRROLINE-5-CARBOXYLATE SYNTHASE"/>
    <property type="match status" value="1"/>
</dbReference>
<dbReference type="PANTHER" id="PTHR11063">
    <property type="entry name" value="GLUTAMATE SEMIALDEHYDE DEHYDROGENASE"/>
    <property type="match status" value="1"/>
</dbReference>
<dbReference type="Pfam" id="PF00171">
    <property type="entry name" value="Aldedh"/>
    <property type="match status" value="1"/>
</dbReference>
<dbReference type="PIRSF" id="PIRSF000151">
    <property type="entry name" value="GPR"/>
    <property type="match status" value="1"/>
</dbReference>
<dbReference type="SUPFAM" id="SSF53720">
    <property type="entry name" value="ALDH-like"/>
    <property type="match status" value="1"/>
</dbReference>
<dbReference type="PROSITE" id="PS01223">
    <property type="entry name" value="PROA"/>
    <property type="match status" value="1"/>
</dbReference>
<name>PROA_LISMH</name>
<keyword id="KW-0028">Amino-acid biosynthesis</keyword>
<keyword id="KW-0963">Cytoplasm</keyword>
<keyword id="KW-0521">NADP</keyword>
<keyword id="KW-0560">Oxidoreductase</keyword>
<keyword id="KW-0641">Proline biosynthesis</keyword>